<protein>
    <recommendedName>
        <fullName evidence="1">Phosphomethylpyrimidine synthase</fullName>
        <ecNumber evidence="1">4.1.99.17</ecNumber>
    </recommendedName>
    <alternativeName>
        <fullName evidence="1">Hydroxymethylpyrimidine phosphate synthase</fullName>
        <shortName evidence="1">HMP-P synthase</shortName>
        <shortName evidence="1">HMP-phosphate synthase</shortName>
        <shortName evidence="1">HMPP synthase</shortName>
    </alternativeName>
    <alternativeName>
        <fullName evidence="1">Thiamine biosynthesis protein ThiC</fullName>
    </alternativeName>
</protein>
<comment type="function">
    <text evidence="1">Catalyzes the synthesis of the hydroxymethylpyrimidine phosphate (HMP-P) moiety of thiamine from aminoimidazole ribotide (AIR) in a radical S-adenosyl-L-methionine (SAM)-dependent reaction.</text>
</comment>
<comment type="catalytic activity">
    <reaction evidence="1">
        <text>5-amino-1-(5-phospho-beta-D-ribosyl)imidazole + S-adenosyl-L-methionine = 4-amino-2-methyl-5-(phosphooxymethyl)pyrimidine + CO + 5'-deoxyadenosine + formate + L-methionine + 3 H(+)</text>
        <dbReference type="Rhea" id="RHEA:24840"/>
        <dbReference type="ChEBI" id="CHEBI:15378"/>
        <dbReference type="ChEBI" id="CHEBI:15740"/>
        <dbReference type="ChEBI" id="CHEBI:17245"/>
        <dbReference type="ChEBI" id="CHEBI:17319"/>
        <dbReference type="ChEBI" id="CHEBI:57844"/>
        <dbReference type="ChEBI" id="CHEBI:58354"/>
        <dbReference type="ChEBI" id="CHEBI:59789"/>
        <dbReference type="ChEBI" id="CHEBI:137981"/>
        <dbReference type="EC" id="4.1.99.17"/>
    </reaction>
</comment>
<comment type="cofactor">
    <cofactor evidence="1">
        <name>[4Fe-4S] cluster</name>
        <dbReference type="ChEBI" id="CHEBI:49883"/>
    </cofactor>
    <text evidence="1">Binds 1 [4Fe-4S] cluster per subunit. The cluster is coordinated with 3 cysteines and an exchangeable S-adenosyl-L-methionine.</text>
</comment>
<comment type="pathway">
    <text evidence="1">Cofactor biosynthesis; thiamine diphosphate biosynthesis.</text>
</comment>
<comment type="subunit">
    <text evidence="1">Homodimer.</text>
</comment>
<comment type="similarity">
    <text evidence="1">Belongs to the ThiC family.</text>
</comment>
<accession>Q6G099</accession>
<sequence>MQKKTLSISCNPFPASRKIYQQSLLFSDVRVPLREISLTDGSNEKPLKVYDTSGPYTDKDTIIDFTKGLPAISLPWLSKRADTESYSARSVKPEDNGLAYDTKTVPAFKQKRPILRAKNGKAITQMAYARAGIITAEMEYVAIRENEGLEIKNQQKAQSDETCNGSIPEIYTAEFVRNEIACGRAIIPKNINHPECEPMIIGRNFRVKINANIGNSAVTSSMAEEIDKMVWAIHWGADTVMDLSTGRNIHNIREWILRNSPVPIGTVPLYQALEKVQGIAENLTWDIFRDTLIEQAEQGVDYFTIHAGLRLPFIPLTANRVTGIVSRGGSIMAKWCLHHHTESFLYEHFNEICDIARTYDISLSLGDGLRPGSIADANDEAQFAELKTLGELTKIAWAKDVQVMIEGPGHIPMHKIKENMEQQLDLCHEAPFYTLGPLTTDIAPGYDHITSAIGAAMIGWFGTAMLCYVTPKEHLGLPDKNDVKTGVITYKIAAHAADLAKGLPRAQLRDNALSRARFDFRWHDQFNLSLDPETACAFHDETMPKEAHKLVHFCSMCGPKFCSMRISHDIREAAAINKPKGDGIGCQV</sequence>
<reference key="1">
    <citation type="journal article" date="2004" name="Proc. Natl. Acad. Sci. U.S.A.">
        <title>The louse-borne human pathogen Bartonella quintana is a genomic derivative of the zoonotic agent Bartonella henselae.</title>
        <authorList>
            <person name="Alsmark U.C.M."/>
            <person name="Frank A.C."/>
            <person name="Karlberg E.O."/>
            <person name="Legault B.-A."/>
            <person name="Ardell D.H."/>
            <person name="Canbaeck B."/>
            <person name="Eriksson A.-S."/>
            <person name="Naeslund A.K."/>
            <person name="Handley S.A."/>
            <person name="Huvet M."/>
            <person name="La Scola B."/>
            <person name="Holmberg M."/>
            <person name="Andersson S.G.E."/>
        </authorList>
    </citation>
    <scope>NUCLEOTIDE SEQUENCE [LARGE SCALE GENOMIC DNA]</scope>
    <source>
        <strain>Toulouse</strain>
    </source>
</reference>
<proteinExistence type="inferred from homology"/>
<organism>
    <name type="scientific">Bartonella quintana (strain Toulouse)</name>
    <name type="common">Rochalimaea quintana</name>
    <dbReference type="NCBI Taxonomy" id="283165"/>
    <lineage>
        <taxon>Bacteria</taxon>
        <taxon>Pseudomonadati</taxon>
        <taxon>Pseudomonadota</taxon>
        <taxon>Alphaproteobacteria</taxon>
        <taxon>Hyphomicrobiales</taxon>
        <taxon>Bartonellaceae</taxon>
        <taxon>Bartonella</taxon>
    </lineage>
</organism>
<name>THIC_BARQU</name>
<keyword id="KW-0004">4Fe-4S</keyword>
<keyword id="KW-0408">Iron</keyword>
<keyword id="KW-0411">Iron-sulfur</keyword>
<keyword id="KW-0456">Lyase</keyword>
<keyword id="KW-0479">Metal-binding</keyword>
<keyword id="KW-0949">S-adenosyl-L-methionine</keyword>
<keyword id="KW-0784">Thiamine biosynthesis</keyword>
<keyword id="KW-0862">Zinc</keyword>
<gene>
    <name evidence="1" type="primary">thiC</name>
    <name type="ordered locus">BQ04110</name>
</gene>
<dbReference type="EC" id="4.1.99.17" evidence="1"/>
<dbReference type="EMBL" id="BX897700">
    <property type="protein sequence ID" value="CAF25910.1"/>
    <property type="molecule type" value="Genomic_DNA"/>
</dbReference>
<dbReference type="SMR" id="Q6G099"/>
<dbReference type="KEGG" id="bqu:BQ04110"/>
<dbReference type="eggNOG" id="COG0422">
    <property type="taxonomic scope" value="Bacteria"/>
</dbReference>
<dbReference type="HOGENOM" id="CLU_013181_2_1_5"/>
<dbReference type="OrthoDB" id="9805897at2"/>
<dbReference type="UniPathway" id="UPA00060"/>
<dbReference type="Proteomes" id="UP000000597">
    <property type="component" value="Chromosome"/>
</dbReference>
<dbReference type="GO" id="GO:0005829">
    <property type="term" value="C:cytosol"/>
    <property type="evidence" value="ECO:0007669"/>
    <property type="project" value="TreeGrafter"/>
</dbReference>
<dbReference type="GO" id="GO:0051539">
    <property type="term" value="F:4 iron, 4 sulfur cluster binding"/>
    <property type="evidence" value="ECO:0007669"/>
    <property type="project" value="UniProtKB-KW"/>
</dbReference>
<dbReference type="GO" id="GO:0016830">
    <property type="term" value="F:carbon-carbon lyase activity"/>
    <property type="evidence" value="ECO:0007669"/>
    <property type="project" value="InterPro"/>
</dbReference>
<dbReference type="GO" id="GO:0008270">
    <property type="term" value="F:zinc ion binding"/>
    <property type="evidence" value="ECO:0007669"/>
    <property type="project" value="UniProtKB-UniRule"/>
</dbReference>
<dbReference type="GO" id="GO:0009228">
    <property type="term" value="P:thiamine biosynthetic process"/>
    <property type="evidence" value="ECO:0007669"/>
    <property type="project" value="UniProtKB-KW"/>
</dbReference>
<dbReference type="GO" id="GO:0009229">
    <property type="term" value="P:thiamine diphosphate biosynthetic process"/>
    <property type="evidence" value="ECO:0007669"/>
    <property type="project" value="UniProtKB-UniRule"/>
</dbReference>
<dbReference type="FunFam" id="3.20.20.540:FF:000001">
    <property type="entry name" value="Phosphomethylpyrimidine synthase"/>
    <property type="match status" value="1"/>
</dbReference>
<dbReference type="Gene3D" id="6.10.250.620">
    <property type="match status" value="1"/>
</dbReference>
<dbReference type="Gene3D" id="3.20.20.540">
    <property type="entry name" value="Radical SAM ThiC family, central domain"/>
    <property type="match status" value="1"/>
</dbReference>
<dbReference type="HAMAP" id="MF_00089">
    <property type="entry name" value="ThiC"/>
    <property type="match status" value="1"/>
</dbReference>
<dbReference type="InterPro" id="IPR037509">
    <property type="entry name" value="ThiC"/>
</dbReference>
<dbReference type="InterPro" id="IPR025747">
    <property type="entry name" value="ThiC-associated_dom"/>
</dbReference>
<dbReference type="InterPro" id="IPR038521">
    <property type="entry name" value="ThiC/Bza_core_dom"/>
</dbReference>
<dbReference type="InterPro" id="IPR002817">
    <property type="entry name" value="ThiC/BzaA/B"/>
</dbReference>
<dbReference type="NCBIfam" id="NF006763">
    <property type="entry name" value="PRK09284.1"/>
    <property type="match status" value="1"/>
</dbReference>
<dbReference type="NCBIfam" id="NF009895">
    <property type="entry name" value="PRK13352.1"/>
    <property type="match status" value="1"/>
</dbReference>
<dbReference type="NCBIfam" id="TIGR00190">
    <property type="entry name" value="thiC"/>
    <property type="match status" value="1"/>
</dbReference>
<dbReference type="PANTHER" id="PTHR30557:SF1">
    <property type="entry name" value="PHOSPHOMETHYLPYRIMIDINE SYNTHASE, CHLOROPLASTIC"/>
    <property type="match status" value="1"/>
</dbReference>
<dbReference type="PANTHER" id="PTHR30557">
    <property type="entry name" value="THIAMINE BIOSYNTHESIS PROTEIN THIC"/>
    <property type="match status" value="1"/>
</dbReference>
<dbReference type="Pfam" id="PF13667">
    <property type="entry name" value="ThiC-associated"/>
    <property type="match status" value="1"/>
</dbReference>
<dbReference type="Pfam" id="PF01964">
    <property type="entry name" value="ThiC_Rad_SAM"/>
    <property type="match status" value="1"/>
</dbReference>
<dbReference type="SFLD" id="SFLDF00407">
    <property type="entry name" value="phosphomethylpyrimidine_syntha"/>
    <property type="match status" value="1"/>
</dbReference>
<dbReference type="SFLD" id="SFLDG01114">
    <property type="entry name" value="phosphomethylpyrimidine_syntha"/>
    <property type="match status" value="1"/>
</dbReference>
<dbReference type="SFLD" id="SFLDS00113">
    <property type="entry name" value="Radical_SAM_Phosphomethylpyrim"/>
    <property type="match status" value="1"/>
</dbReference>
<feature type="chain" id="PRO_0000242243" description="Phosphomethylpyrimidine synthase">
    <location>
        <begin position="1"/>
        <end position="588"/>
    </location>
</feature>
<feature type="binding site" evidence="1">
    <location>
        <position position="212"/>
    </location>
    <ligand>
        <name>substrate</name>
    </ligand>
</feature>
<feature type="binding site" evidence="1">
    <location>
        <position position="241"/>
    </location>
    <ligand>
        <name>substrate</name>
    </ligand>
</feature>
<feature type="binding site" evidence="1">
    <location>
        <position position="270"/>
    </location>
    <ligand>
        <name>substrate</name>
    </ligand>
</feature>
<feature type="binding site" evidence="1">
    <location>
        <position position="306"/>
    </location>
    <ligand>
        <name>substrate</name>
    </ligand>
</feature>
<feature type="binding site" evidence="1">
    <location>
        <begin position="326"/>
        <end position="328"/>
    </location>
    <ligand>
        <name>substrate</name>
    </ligand>
</feature>
<feature type="binding site" evidence="1">
    <location>
        <begin position="367"/>
        <end position="370"/>
    </location>
    <ligand>
        <name>substrate</name>
    </ligand>
</feature>
<feature type="binding site" evidence="1">
    <location>
        <position position="406"/>
    </location>
    <ligand>
        <name>substrate</name>
    </ligand>
</feature>
<feature type="binding site" evidence="1">
    <location>
        <position position="410"/>
    </location>
    <ligand>
        <name>Zn(2+)</name>
        <dbReference type="ChEBI" id="CHEBI:29105"/>
    </ligand>
</feature>
<feature type="binding site" evidence="1">
    <location>
        <position position="433"/>
    </location>
    <ligand>
        <name>substrate</name>
    </ligand>
</feature>
<feature type="binding site" evidence="1">
    <location>
        <position position="474"/>
    </location>
    <ligand>
        <name>Zn(2+)</name>
        <dbReference type="ChEBI" id="CHEBI:29105"/>
    </ligand>
</feature>
<feature type="binding site" evidence="1">
    <location>
        <position position="554"/>
    </location>
    <ligand>
        <name>[4Fe-4S] cluster</name>
        <dbReference type="ChEBI" id="CHEBI:49883"/>
        <note>4Fe-4S-S-AdoMet</note>
    </ligand>
</feature>
<feature type="binding site" evidence="1">
    <location>
        <position position="557"/>
    </location>
    <ligand>
        <name>[4Fe-4S] cluster</name>
        <dbReference type="ChEBI" id="CHEBI:49883"/>
        <note>4Fe-4S-S-AdoMet</note>
    </ligand>
</feature>
<feature type="binding site" evidence="1">
    <location>
        <position position="562"/>
    </location>
    <ligand>
        <name>[4Fe-4S] cluster</name>
        <dbReference type="ChEBI" id="CHEBI:49883"/>
        <note>4Fe-4S-S-AdoMet</note>
    </ligand>
</feature>
<evidence type="ECO:0000255" key="1">
    <source>
        <dbReference type="HAMAP-Rule" id="MF_00089"/>
    </source>
</evidence>